<feature type="chain" id="PRO_0000127246" description="DNA-binding protein inhibitor ID-3">
    <location>
        <begin position="1"/>
        <end position="119"/>
    </location>
</feature>
<feature type="domain" description="bHLH" evidence="2">
    <location>
        <begin position="28"/>
        <end position="80"/>
    </location>
</feature>
<evidence type="ECO:0000250" key="1"/>
<evidence type="ECO:0000255" key="2">
    <source>
        <dbReference type="PROSITE-ProRule" id="PRU00981"/>
    </source>
</evidence>
<reference key="1">
    <citation type="journal article" date="2002" name="Exp. Cell Res.">
        <title>Study of gene expression in thyrotropin-stimulated thyroid cells by cDNA expression array: ID3 transcription modulating factor as an early response protein and tumor marker in thyroid carcinomas.</title>
        <authorList>
            <person name="Deleu S."/>
            <person name="Savonet V."/>
            <person name="Behrends J."/>
            <person name="Dumont J."/>
            <person name="Maenhaut C."/>
        </authorList>
    </citation>
    <scope>NUCLEOTIDE SEQUENCE [MRNA]</scope>
    <source>
        <tissue>Thyroid</tissue>
    </source>
</reference>
<dbReference type="EMBL" id="AJ271644">
    <property type="protein sequence ID" value="CAB70600.1"/>
    <property type="molecule type" value="mRNA"/>
</dbReference>
<dbReference type="RefSeq" id="NP_001003025.1">
    <property type="nucleotide sequence ID" value="NM_001003025.2"/>
</dbReference>
<dbReference type="BMRB" id="Q712G9"/>
<dbReference type="SMR" id="Q712G9"/>
<dbReference type="FunCoup" id="Q712G9">
    <property type="interactions" value="129"/>
</dbReference>
<dbReference type="STRING" id="9615.ENSCAFP00000019544"/>
<dbReference type="PaxDb" id="9612-ENSCAFP00000019544"/>
<dbReference type="DNASU" id="403547"/>
<dbReference type="Ensembl" id="ENSCAFT00000021046.5">
    <property type="protein sequence ID" value="ENSCAFP00000019544.4"/>
    <property type="gene ID" value="ENSCAFG00000013269.5"/>
</dbReference>
<dbReference type="Ensembl" id="ENSCAFT00030002632.1">
    <property type="protein sequence ID" value="ENSCAFP00030002344.1"/>
    <property type="gene ID" value="ENSCAFG00030001473.1"/>
</dbReference>
<dbReference type="Ensembl" id="ENSCAFT00040003263.1">
    <property type="protein sequence ID" value="ENSCAFP00040002800.1"/>
    <property type="gene ID" value="ENSCAFG00040001727.1"/>
</dbReference>
<dbReference type="Ensembl" id="ENSCAFT00845026977.1">
    <property type="protein sequence ID" value="ENSCAFP00845021233.1"/>
    <property type="gene ID" value="ENSCAFG00845015085.1"/>
</dbReference>
<dbReference type="GeneID" id="403547"/>
<dbReference type="KEGG" id="cfa:403547"/>
<dbReference type="CTD" id="3399"/>
<dbReference type="VEuPathDB" id="HostDB:ENSCAFG00845015085"/>
<dbReference type="VGNC" id="VGNC:41862">
    <property type="gene designation" value="ID3"/>
</dbReference>
<dbReference type="eggNOG" id="ENOG502S53I">
    <property type="taxonomic scope" value="Eukaryota"/>
</dbReference>
<dbReference type="GeneTree" id="ENSGT00940000160504"/>
<dbReference type="InParanoid" id="Q712G9"/>
<dbReference type="OrthoDB" id="10047910at2759"/>
<dbReference type="Proteomes" id="UP000002254">
    <property type="component" value="Chromosome 2"/>
</dbReference>
<dbReference type="Proteomes" id="UP000694429">
    <property type="component" value="Chromosome 2"/>
</dbReference>
<dbReference type="Proteomes" id="UP000694542">
    <property type="component" value="Chromosome 2"/>
</dbReference>
<dbReference type="Proteomes" id="UP000805418">
    <property type="component" value="Chromosome 2"/>
</dbReference>
<dbReference type="Bgee" id="ENSCAFG00000013269">
    <property type="expression patterns" value="Expressed in placenta and 49 other cell types or tissues"/>
</dbReference>
<dbReference type="GO" id="GO:0005737">
    <property type="term" value="C:cytoplasm"/>
    <property type="evidence" value="ECO:0007669"/>
    <property type="project" value="Ensembl"/>
</dbReference>
<dbReference type="GO" id="GO:0005634">
    <property type="term" value="C:nucleus"/>
    <property type="evidence" value="ECO:0000318"/>
    <property type="project" value="GO_Central"/>
</dbReference>
<dbReference type="GO" id="GO:0043425">
    <property type="term" value="F:bHLH transcription factor binding"/>
    <property type="evidence" value="ECO:0007669"/>
    <property type="project" value="Ensembl"/>
</dbReference>
<dbReference type="GO" id="GO:1901707">
    <property type="term" value="F:leptomycin B binding"/>
    <property type="evidence" value="ECO:0007669"/>
    <property type="project" value="Ensembl"/>
</dbReference>
<dbReference type="GO" id="GO:0046983">
    <property type="term" value="F:protein dimerization activity"/>
    <property type="evidence" value="ECO:0007669"/>
    <property type="project" value="InterPro"/>
</dbReference>
<dbReference type="GO" id="GO:0019904">
    <property type="term" value="F:protein domain specific binding"/>
    <property type="evidence" value="ECO:0007669"/>
    <property type="project" value="Ensembl"/>
</dbReference>
<dbReference type="GO" id="GO:0003714">
    <property type="term" value="F:transcription corepressor activity"/>
    <property type="evidence" value="ECO:0000318"/>
    <property type="project" value="GO_Central"/>
</dbReference>
<dbReference type="GO" id="GO:0140416">
    <property type="term" value="F:transcription regulator inhibitor activity"/>
    <property type="evidence" value="ECO:0007669"/>
    <property type="project" value="Ensembl"/>
</dbReference>
<dbReference type="GO" id="GO:0072750">
    <property type="term" value="P:cellular response to leptomycin B"/>
    <property type="evidence" value="ECO:0007669"/>
    <property type="project" value="Ensembl"/>
</dbReference>
<dbReference type="GO" id="GO:0007417">
    <property type="term" value="P:central nervous system development"/>
    <property type="evidence" value="ECO:0007669"/>
    <property type="project" value="Ensembl"/>
</dbReference>
<dbReference type="GO" id="GO:0007623">
    <property type="term" value="P:circadian rhythm"/>
    <property type="evidence" value="ECO:0007669"/>
    <property type="project" value="Ensembl"/>
</dbReference>
<dbReference type="GO" id="GO:0030855">
    <property type="term" value="P:epithelial cell differentiation"/>
    <property type="evidence" value="ECO:0007669"/>
    <property type="project" value="Ensembl"/>
</dbReference>
<dbReference type="GO" id="GO:0007507">
    <property type="term" value="P:heart development"/>
    <property type="evidence" value="ECO:0007669"/>
    <property type="project" value="Ensembl"/>
</dbReference>
<dbReference type="GO" id="GO:0001656">
    <property type="term" value="P:metanephros development"/>
    <property type="evidence" value="ECO:0007669"/>
    <property type="project" value="Ensembl"/>
</dbReference>
<dbReference type="GO" id="GO:0007517">
    <property type="term" value="P:muscle organ development"/>
    <property type="evidence" value="ECO:0007669"/>
    <property type="project" value="UniProtKB-KW"/>
</dbReference>
<dbReference type="GO" id="GO:0045892">
    <property type="term" value="P:negative regulation of DNA-templated transcription"/>
    <property type="evidence" value="ECO:0000250"/>
    <property type="project" value="UniProtKB"/>
</dbReference>
<dbReference type="GO" id="GO:0010629">
    <property type="term" value="P:negative regulation of gene expression"/>
    <property type="evidence" value="ECO:0007669"/>
    <property type="project" value="Ensembl"/>
</dbReference>
<dbReference type="GO" id="GO:0045662">
    <property type="term" value="P:negative regulation of myoblast differentiation"/>
    <property type="evidence" value="ECO:0007669"/>
    <property type="project" value="Ensembl"/>
</dbReference>
<dbReference type="GO" id="GO:0045668">
    <property type="term" value="P:negative regulation of osteoblast differentiation"/>
    <property type="evidence" value="ECO:0007669"/>
    <property type="project" value="Ensembl"/>
</dbReference>
<dbReference type="GO" id="GO:0000122">
    <property type="term" value="P:negative regulation of transcription by RNA polymerase II"/>
    <property type="evidence" value="ECO:0000318"/>
    <property type="project" value="GO_Central"/>
</dbReference>
<dbReference type="GO" id="GO:0030182">
    <property type="term" value="P:neuron differentiation"/>
    <property type="evidence" value="ECO:0000318"/>
    <property type="project" value="GO_Central"/>
</dbReference>
<dbReference type="GO" id="GO:0030903">
    <property type="term" value="P:notochord development"/>
    <property type="evidence" value="ECO:0007669"/>
    <property type="project" value="Ensembl"/>
</dbReference>
<dbReference type="GO" id="GO:0042476">
    <property type="term" value="P:odontogenesis"/>
    <property type="evidence" value="ECO:0007669"/>
    <property type="project" value="Ensembl"/>
</dbReference>
<dbReference type="GO" id="GO:0010628">
    <property type="term" value="P:positive regulation of gene expression"/>
    <property type="evidence" value="ECO:0007669"/>
    <property type="project" value="Ensembl"/>
</dbReference>
<dbReference type="CDD" id="cd19693">
    <property type="entry name" value="bHLH_dnHLH_ID3"/>
    <property type="match status" value="1"/>
</dbReference>
<dbReference type="FunFam" id="4.10.280.10:FF:000039">
    <property type="entry name" value="DNA-binding protein inhibitor ID-3"/>
    <property type="match status" value="1"/>
</dbReference>
<dbReference type="Gene3D" id="4.10.280.10">
    <property type="entry name" value="Helix-loop-helix DNA-binding domain"/>
    <property type="match status" value="1"/>
</dbReference>
<dbReference type="InterPro" id="IPR011598">
    <property type="entry name" value="bHLH_dom"/>
</dbReference>
<dbReference type="InterPro" id="IPR026052">
    <property type="entry name" value="DNA-bd_prot-inh"/>
</dbReference>
<dbReference type="InterPro" id="IPR036638">
    <property type="entry name" value="HLH_DNA-bd_sf"/>
</dbReference>
<dbReference type="PANTHER" id="PTHR11723">
    <property type="entry name" value="DNA-BINDING PROTEIN INHIBITOR"/>
    <property type="match status" value="1"/>
</dbReference>
<dbReference type="PANTHER" id="PTHR11723:SF16">
    <property type="entry name" value="DNA-BINDING PROTEIN INHIBITOR ID-3"/>
    <property type="match status" value="1"/>
</dbReference>
<dbReference type="Pfam" id="PF00010">
    <property type="entry name" value="HLH"/>
    <property type="match status" value="1"/>
</dbReference>
<dbReference type="SMART" id="SM00353">
    <property type="entry name" value="HLH"/>
    <property type="match status" value="1"/>
</dbReference>
<dbReference type="SUPFAM" id="SSF47459">
    <property type="entry name" value="HLH, helix-loop-helix DNA-binding domain"/>
    <property type="match status" value="1"/>
</dbReference>
<dbReference type="PROSITE" id="PS50888">
    <property type="entry name" value="BHLH"/>
    <property type="match status" value="1"/>
</dbReference>
<proteinExistence type="inferred from homology"/>
<protein>
    <recommendedName>
        <fullName>DNA-binding protein inhibitor ID-3</fullName>
    </recommendedName>
    <alternativeName>
        <fullName>Inhibitor of DNA binding 3</fullName>
    </alternativeName>
    <alternativeName>
        <fullName>Inhibitor of differentiation 3</fullName>
    </alternativeName>
</protein>
<comment type="function">
    <text evidence="1">Transcriptional regulator (lacking a basic DNA binding domain) which negatively regulates the basic helix-loop-helix (bHLH) transcription factors by forming heterodimers and inhibiting their DNA binding and transcriptional activity. Implicated in regulating a variety of cellular processes, including cellular growth, senescence, differentiation, apoptosis, angiogenesis, and neoplastic transformation. Involved in myogenesis by inhibiting skeletal muscle and cardiac myocyte differentiation and promoting muscle precursor cells proliferation. Inhibits the binding of E2A-containing protein complexes to muscle creatine kinase E-box enhancer. Regulates the circadian clock by repressing the transcriptional activator activity of the CLOCK-BMAL1 heterodimer (By similarity).</text>
</comment>
<comment type="subunit">
    <text evidence="1">Homodimer, and heterodimer with other HLH proteins. Interacts with COPS5 and COPS7A. Interacts with IFI204. Interacts with GATA4 and NKX2-5. Interacts with ANKRD2; both proteins cooperate in myoblast differentiation. Interacts with CLOCK and BMAL1 (By similarity).</text>
</comment>
<comment type="subcellular location">
    <subcellularLocation>
        <location evidence="2">Nucleus</location>
    </subcellularLocation>
</comment>
<gene>
    <name type="primary">ID3</name>
</gene>
<sequence length="119" mass="12969">MKALSPVRGCYEAVCCLSERSLAIARGRGKGPAAEEPLSLLDDMNHCYSRLRELVPGVPRGTQLSQVEILQRVIDYILDLQVVLAEPAPGPPDGPHLPIQTAELAPELVISNDKRSFCH</sequence>
<keyword id="KW-0090">Biological rhythms</keyword>
<keyword id="KW-0517">Myogenesis</keyword>
<keyword id="KW-0539">Nucleus</keyword>
<keyword id="KW-1185">Reference proteome</keyword>
<keyword id="KW-0678">Repressor</keyword>
<keyword id="KW-0804">Transcription</keyword>
<keyword id="KW-0805">Transcription regulation</keyword>
<organism>
    <name type="scientific">Canis lupus familiaris</name>
    <name type="common">Dog</name>
    <name type="synonym">Canis familiaris</name>
    <dbReference type="NCBI Taxonomy" id="9615"/>
    <lineage>
        <taxon>Eukaryota</taxon>
        <taxon>Metazoa</taxon>
        <taxon>Chordata</taxon>
        <taxon>Craniata</taxon>
        <taxon>Vertebrata</taxon>
        <taxon>Euteleostomi</taxon>
        <taxon>Mammalia</taxon>
        <taxon>Eutheria</taxon>
        <taxon>Laurasiatheria</taxon>
        <taxon>Carnivora</taxon>
        <taxon>Caniformia</taxon>
        <taxon>Canidae</taxon>
        <taxon>Canis</taxon>
    </lineage>
</organism>
<accession>Q712G9</accession>
<name>ID3_CANLF</name>